<keyword id="KW-0240">DNA-directed RNA polymerase</keyword>
<keyword id="KW-0548">Nucleotidyltransferase</keyword>
<keyword id="KW-0804">Transcription</keyword>
<keyword id="KW-0808">Transferase</keyword>
<protein>
    <recommendedName>
        <fullName evidence="1">DNA-directed RNA polymerase subunit beta</fullName>
        <shortName evidence="1">RNAP subunit beta</shortName>
        <ecNumber evidence="1">2.7.7.6</ecNumber>
    </recommendedName>
    <alternativeName>
        <fullName evidence="1">RNA polymerase subunit beta</fullName>
    </alternativeName>
    <alternativeName>
        <fullName evidence="1">Transcriptase subunit beta</fullName>
    </alternativeName>
</protein>
<proteinExistence type="inferred from homology"/>
<gene>
    <name evidence="1" type="primary">rpoB</name>
    <name type="ordered locus">SEN3937</name>
</gene>
<feature type="chain" id="PRO_1000141731" description="DNA-directed RNA polymerase subunit beta">
    <location>
        <begin position="1"/>
        <end position="1342"/>
    </location>
</feature>
<comment type="function">
    <text evidence="1">DNA-dependent RNA polymerase catalyzes the transcription of DNA into RNA using the four ribonucleoside triphosphates as substrates.</text>
</comment>
<comment type="catalytic activity">
    <reaction evidence="1">
        <text>RNA(n) + a ribonucleoside 5'-triphosphate = RNA(n+1) + diphosphate</text>
        <dbReference type="Rhea" id="RHEA:21248"/>
        <dbReference type="Rhea" id="RHEA-COMP:14527"/>
        <dbReference type="Rhea" id="RHEA-COMP:17342"/>
        <dbReference type="ChEBI" id="CHEBI:33019"/>
        <dbReference type="ChEBI" id="CHEBI:61557"/>
        <dbReference type="ChEBI" id="CHEBI:140395"/>
        <dbReference type="EC" id="2.7.7.6"/>
    </reaction>
</comment>
<comment type="subunit">
    <text evidence="1">The RNAP catalytic core consists of 2 alpha, 1 beta, 1 beta' and 1 omega subunit. When a sigma factor is associated with the core the holoenzyme is formed, which can initiate transcription.</text>
</comment>
<comment type="similarity">
    <text evidence="1">Belongs to the RNA polymerase beta chain family.</text>
</comment>
<name>RPOB_SALEP</name>
<organism>
    <name type="scientific">Salmonella enteritidis PT4 (strain P125109)</name>
    <dbReference type="NCBI Taxonomy" id="550537"/>
    <lineage>
        <taxon>Bacteria</taxon>
        <taxon>Pseudomonadati</taxon>
        <taxon>Pseudomonadota</taxon>
        <taxon>Gammaproteobacteria</taxon>
        <taxon>Enterobacterales</taxon>
        <taxon>Enterobacteriaceae</taxon>
        <taxon>Salmonella</taxon>
    </lineage>
</organism>
<reference key="1">
    <citation type="journal article" date="2008" name="Genome Res.">
        <title>Comparative genome analysis of Salmonella enteritidis PT4 and Salmonella gallinarum 287/91 provides insights into evolutionary and host adaptation pathways.</title>
        <authorList>
            <person name="Thomson N.R."/>
            <person name="Clayton D.J."/>
            <person name="Windhorst D."/>
            <person name="Vernikos G."/>
            <person name="Davidson S."/>
            <person name="Churcher C."/>
            <person name="Quail M.A."/>
            <person name="Stevens M."/>
            <person name="Jones M.A."/>
            <person name="Watson M."/>
            <person name="Barron A."/>
            <person name="Layton A."/>
            <person name="Pickard D."/>
            <person name="Kingsley R.A."/>
            <person name="Bignell A."/>
            <person name="Clark L."/>
            <person name="Harris B."/>
            <person name="Ormond D."/>
            <person name="Abdellah Z."/>
            <person name="Brooks K."/>
            <person name="Cherevach I."/>
            <person name="Chillingworth T."/>
            <person name="Woodward J."/>
            <person name="Norberczak H."/>
            <person name="Lord A."/>
            <person name="Arrowsmith C."/>
            <person name="Jagels K."/>
            <person name="Moule S."/>
            <person name="Mungall K."/>
            <person name="Saunders M."/>
            <person name="Whitehead S."/>
            <person name="Chabalgoity J.A."/>
            <person name="Maskell D."/>
            <person name="Humphreys T."/>
            <person name="Roberts M."/>
            <person name="Barrow P.A."/>
            <person name="Dougan G."/>
            <person name="Parkhill J."/>
        </authorList>
    </citation>
    <scope>NUCLEOTIDE SEQUENCE [LARGE SCALE GENOMIC DNA]</scope>
    <source>
        <strain>P125109</strain>
    </source>
</reference>
<dbReference type="EC" id="2.7.7.6" evidence="1"/>
<dbReference type="EMBL" id="AM933172">
    <property type="protein sequence ID" value="CAR35508.1"/>
    <property type="molecule type" value="Genomic_DNA"/>
</dbReference>
<dbReference type="RefSeq" id="WP_000263105.1">
    <property type="nucleotide sequence ID" value="NC_011294.1"/>
</dbReference>
<dbReference type="SMR" id="B5QYD8"/>
<dbReference type="KEGG" id="set:SEN3937"/>
<dbReference type="HOGENOM" id="CLU_000524_4_0_6"/>
<dbReference type="Proteomes" id="UP000000613">
    <property type="component" value="Chromosome"/>
</dbReference>
<dbReference type="GO" id="GO:0000428">
    <property type="term" value="C:DNA-directed RNA polymerase complex"/>
    <property type="evidence" value="ECO:0007669"/>
    <property type="project" value="UniProtKB-KW"/>
</dbReference>
<dbReference type="GO" id="GO:0003677">
    <property type="term" value="F:DNA binding"/>
    <property type="evidence" value="ECO:0007669"/>
    <property type="project" value="UniProtKB-UniRule"/>
</dbReference>
<dbReference type="GO" id="GO:0003899">
    <property type="term" value="F:DNA-directed RNA polymerase activity"/>
    <property type="evidence" value="ECO:0007669"/>
    <property type="project" value="UniProtKB-UniRule"/>
</dbReference>
<dbReference type="GO" id="GO:0032549">
    <property type="term" value="F:ribonucleoside binding"/>
    <property type="evidence" value="ECO:0007669"/>
    <property type="project" value="InterPro"/>
</dbReference>
<dbReference type="GO" id="GO:0006351">
    <property type="term" value="P:DNA-templated transcription"/>
    <property type="evidence" value="ECO:0007669"/>
    <property type="project" value="UniProtKB-UniRule"/>
</dbReference>
<dbReference type="CDD" id="cd00653">
    <property type="entry name" value="RNA_pol_B_RPB2"/>
    <property type="match status" value="1"/>
</dbReference>
<dbReference type="FunFam" id="2.30.150.10:FF:000001">
    <property type="entry name" value="DNA-directed RNA polymerase subunit beta"/>
    <property type="match status" value="1"/>
</dbReference>
<dbReference type="FunFam" id="2.40.270.10:FF:000003">
    <property type="entry name" value="DNA-directed RNA polymerase subunit beta"/>
    <property type="match status" value="1"/>
</dbReference>
<dbReference type="FunFam" id="2.40.270.10:FF:000004">
    <property type="entry name" value="DNA-directed RNA polymerase subunit beta"/>
    <property type="match status" value="1"/>
</dbReference>
<dbReference type="FunFam" id="2.40.50.100:FF:000006">
    <property type="entry name" value="DNA-directed RNA polymerase subunit beta"/>
    <property type="match status" value="1"/>
</dbReference>
<dbReference type="FunFam" id="2.40.50.150:FF:000001">
    <property type="entry name" value="DNA-directed RNA polymerase subunit beta"/>
    <property type="match status" value="1"/>
</dbReference>
<dbReference type="FunFam" id="3.90.1100.10:FF:000002">
    <property type="entry name" value="DNA-directed RNA polymerase subunit beta"/>
    <property type="match status" value="1"/>
</dbReference>
<dbReference type="FunFam" id="3.90.1110.10:FF:000001">
    <property type="entry name" value="DNA-directed RNA polymerase subunit beta"/>
    <property type="match status" value="1"/>
</dbReference>
<dbReference type="FunFam" id="3.90.1110.10:FF:000004">
    <property type="entry name" value="DNA-directed RNA polymerase subunit beta"/>
    <property type="match status" value="1"/>
</dbReference>
<dbReference type="FunFam" id="3.90.1800.10:FF:000001">
    <property type="entry name" value="DNA-directed RNA polymerase subunit beta"/>
    <property type="match status" value="1"/>
</dbReference>
<dbReference type="Gene3D" id="2.40.50.100">
    <property type="match status" value="1"/>
</dbReference>
<dbReference type="Gene3D" id="2.40.50.150">
    <property type="match status" value="1"/>
</dbReference>
<dbReference type="Gene3D" id="3.90.1100.10">
    <property type="match status" value="2"/>
</dbReference>
<dbReference type="Gene3D" id="6.10.140.1670">
    <property type="match status" value="1"/>
</dbReference>
<dbReference type="Gene3D" id="2.30.150.10">
    <property type="entry name" value="DNA-directed RNA polymerase, beta subunit, external 1 domain"/>
    <property type="match status" value="1"/>
</dbReference>
<dbReference type="Gene3D" id="2.40.270.10">
    <property type="entry name" value="DNA-directed RNA polymerase, subunit 2, domain 6"/>
    <property type="match status" value="1"/>
</dbReference>
<dbReference type="Gene3D" id="3.90.1800.10">
    <property type="entry name" value="RNA polymerase alpha subunit dimerisation domain"/>
    <property type="match status" value="1"/>
</dbReference>
<dbReference type="Gene3D" id="3.90.1110.10">
    <property type="entry name" value="RNA polymerase Rpb2, domain 2"/>
    <property type="match status" value="1"/>
</dbReference>
<dbReference type="HAMAP" id="MF_01321">
    <property type="entry name" value="RNApol_bact_RpoB"/>
    <property type="match status" value="1"/>
</dbReference>
<dbReference type="InterPro" id="IPR042107">
    <property type="entry name" value="DNA-dir_RNA_pol_bsu_ext_1_sf"/>
</dbReference>
<dbReference type="InterPro" id="IPR019462">
    <property type="entry name" value="DNA-dir_RNA_pol_bsu_external_1"/>
</dbReference>
<dbReference type="InterPro" id="IPR015712">
    <property type="entry name" value="DNA-dir_RNA_pol_su2"/>
</dbReference>
<dbReference type="InterPro" id="IPR007120">
    <property type="entry name" value="DNA-dir_RNAP_su2_dom"/>
</dbReference>
<dbReference type="InterPro" id="IPR037033">
    <property type="entry name" value="DNA-dir_RNAP_su2_hyb_sf"/>
</dbReference>
<dbReference type="InterPro" id="IPR010243">
    <property type="entry name" value="RNA_pol_bsu_bac"/>
</dbReference>
<dbReference type="InterPro" id="IPR007121">
    <property type="entry name" value="RNA_pol_bsu_CS"/>
</dbReference>
<dbReference type="InterPro" id="IPR007644">
    <property type="entry name" value="RNA_pol_bsu_protrusion"/>
</dbReference>
<dbReference type="InterPro" id="IPR007642">
    <property type="entry name" value="RNA_pol_Rpb2_2"/>
</dbReference>
<dbReference type="InterPro" id="IPR037034">
    <property type="entry name" value="RNA_pol_Rpb2_2_sf"/>
</dbReference>
<dbReference type="InterPro" id="IPR007645">
    <property type="entry name" value="RNA_pol_Rpb2_3"/>
</dbReference>
<dbReference type="InterPro" id="IPR007641">
    <property type="entry name" value="RNA_pol_Rpb2_7"/>
</dbReference>
<dbReference type="InterPro" id="IPR014724">
    <property type="entry name" value="RNA_pol_RPB2_OB-fold"/>
</dbReference>
<dbReference type="NCBIfam" id="NF001616">
    <property type="entry name" value="PRK00405.1"/>
    <property type="match status" value="1"/>
</dbReference>
<dbReference type="NCBIfam" id="TIGR02013">
    <property type="entry name" value="rpoB"/>
    <property type="match status" value="1"/>
</dbReference>
<dbReference type="PANTHER" id="PTHR20856">
    <property type="entry name" value="DNA-DIRECTED RNA POLYMERASE I SUBUNIT 2"/>
    <property type="match status" value="1"/>
</dbReference>
<dbReference type="Pfam" id="PF04563">
    <property type="entry name" value="RNA_pol_Rpb2_1"/>
    <property type="match status" value="1"/>
</dbReference>
<dbReference type="Pfam" id="PF04561">
    <property type="entry name" value="RNA_pol_Rpb2_2"/>
    <property type="match status" value="2"/>
</dbReference>
<dbReference type="Pfam" id="PF04565">
    <property type="entry name" value="RNA_pol_Rpb2_3"/>
    <property type="match status" value="1"/>
</dbReference>
<dbReference type="Pfam" id="PF10385">
    <property type="entry name" value="RNA_pol_Rpb2_45"/>
    <property type="match status" value="1"/>
</dbReference>
<dbReference type="Pfam" id="PF00562">
    <property type="entry name" value="RNA_pol_Rpb2_6"/>
    <property type="match status" value="1"/>
</dbReference>
<dbReference type="Pfam" id="PF04560">
    <property type="entry name" value="RNA_pol_Rpb2_7"/>
    <property type="match status" value="1"/>
</dbReference>
<dbReference type="SUPFAM" id="SSF64484">
    <property type="entry name" value="beta and beta-prime subunits of DNA dependent RNA-polymerase"/>
    <property type="match status" value="1"/>
</dbReference>
<dbReference type="PROSITE" id="PS01166">
    <property type="entry name" value="RNA_POL_BETA"/>
    <property type="match status" value="1"/>
</dbReference>
<sequence>MVYSYTEKKRIRKDFGKRPQVLDVPYLLSIQLDSFQKFIEQDPEGQYGLEAAFRSVFPIQSYSGNSELQYVSYRLGEPVFDVQECQIRGVTYSAPLRVKLRLVIYEREAPEGTVKDIKEQEVYMGEIPLMTDNGTFVINGTERVIVSQLHRSPGVFFDSDKGKTHSSGKVLYNARIIPYRGSWLDFEFDPKDNLFVRIDRRRKLPATIILRALNYTTEQILDLFFEKVVFEIRDNKLQMELIPERLRGETASFDIEANGKVYVEKGRRITARHIRQLEKDDIKHIEVPVEYIAGKVVSKDYVDESTGELICAANMELSLDLLAKLSQSGHKRIETLFTNDLDHGPYISETVRVDPTNDRLSALVEIYRMMRPGEPPTREAAESLFENLFFSEDRYDLSAVGRMKFNRSLLRDEIEGSGILSKDDIIDVMKKLIDIRNGKGEVDDIDHLGNRRIRSVGEMAENQFRVGLVRVERAVKERLSLGDLDTLMPQDMINAKPISAAVKEFFGSSQLSQFMDQNNPLSEITHKRRISALGPGGLTRERAGFEVRDVHPTHYGRVCPIETPEGPNIGLINSLSVYAQTNEYGFLETPYRRVVDGVVTDEIHYLSAIEEGNYVIAQANSNLDDEGHFVEDLVTCRSKGESSLFSRDQVDYMDVSTQQVVSVGASLIPFLEHDDANRALMGANMQRQAVPTLRADKPLVGTGMERAVAVDSGVTAVAKRGGTVQYVDASRIVIKVNEDEMYPGEAGIDIYNLTKYTRSNQNTCINQMPCVSLGEPVERGDVLADGPSTDLGELALGQNMRVAFMPWNGYNFEDSILVSERVVQEDRFTTIHIQELACVSRDTKLGPEEITADIPNVGEAALSKLDESGIVYIGAEVTGGDILVGKVTPKGETQLTPEEKLLRAIFGEKASDVKDSSLRVPNGVSGTVIDVQVFTRDGVEKDKRALEIEEMQLKQAKKDLSEELQILEAGLFSRIRAVLVSGGVEAEKLDKLPRDRWLELGLTDEEKQNQLEQLAEQYDELKHEFEKKLEAKRRKITQGDDLAPGVLKIVKVYLAVKRRIQPGDKMAGRHGNKGVISKINPIEDMPYDENGTPVDIVLNPLGVPSRMNIGQILETHLGMAAKGIGDKINAMLKQQQEVAKLREFIQRAYDLGADVRQKVDLSTFSDDEVLRLAENLRKGMPIATPVFDGAKEAEIKELLKLGDLPTSGQITLFDGRTGEQFERPVTVGYMYMLKLNHLVDDKMHARSTGSYSLVTQQPLGGKAQFGGQRFGEMEVWALEAYGAAYTLQEMLTVKSDDVNGRTKMYKNIVDGNHQMEPGMPESFNVLLKEIRSLGINIELEDE</sequence>
<accession>B5QYD8</accession>
<evidence type="ECO:0000255" key="1">
    <source>
        <dbReference type="HAMAP-Rule" id="MF_01321"/>
    </source>
</evidence>